<dbReference type="EMBL" id="AJ390504">
    <property type="protein sequence ID" value="CAB77643.1"/>
    <property type="molecule type" value="mRNA"/>
</dbReference>
<dbReference type="SMR" id="Q9P836"/>
<dbReference type="VEuPathDB" id="FungiDB:C1_11360W_A"/>
<dbReference type="VEuPathDB" id="FungiDB:CAWG_00300"/>
<dbReference type="GO" id="GO:0022625">
    <property type="term" value="C:cytosolic large ribosomal subunit"/>
    <property type="evidence" value="ECO:0007669"/>
    <property type="project" value="TreeGrafter"/>
</dbReference>
<dbReference type="GO" id="GO:0019843">
    <property type="term" value="F:rRNA binding"/>
    <property type="evidence" value="ECO:0007669"/>
    <property type="project" value="UniProtKB-KW"/>
</dbReference>
<dbReference type="GO" id="GO:0003735">
    <property type="term" value="F:structural constituent of ribosome"/>
    <property type="evidence" value="ECO:0007669"/>
    <property type="project" value="InterPro"/>
</dbReference>
<dbReference type="GO" id="GO:0008270">
    <property type="term" value="F:zinc ion binding"/>
    <property type="evidence" value="ECO:0007669"/>
    <property type="project" value="UniProtKB-KW"/>
</dbReference>
<dbReference type="GO" id="GO:0006412">
    <property type="term" value="P:translation"/>
    <property type="evidence" value="ECO:0007669"/>
    <property type="project" value="InterPro"/>
</dbReference>
<dbReference type="FunFam" id="2.20.25.30:FF:000001">
    <property type="entry name" value="Ribosomal protein L37"/>
    <property type="match status" value="1"/>
</dbReference>
<dbReference type="Gene3D" id="2.20.25.30">
    <property type="match status" value="1"/>
</dbReference>
<dbReference type="InterPro" id="IPR001569">
    <property type="entry name" value="Ribosomal_eL37"/>
</dbReference>
<dbReference type="InterPro" id="IPR011331">
    <property type="entry name" value="Ribosomal_eL37/eL43"/>
</dbReference>
<dbReference type="InterPro" id="IPR018267">
    <property type="entry name" value="Ribosomal_eL37_CS"/>
</dbReference>
<dbReference type="InterPro" id="IPR011332">
    <property type="entry name" value="Ribosomal_zn-bd"/>
</dbReference>
<dbReference type="PANTHER" id="PTHR10768">
    <property type="entry name" value="60S RIBOSOMAL PROTEIN L37"/>
    <property type="match status" value="1"/>
</dbReference>
<dbReference type="PANTHER" id="PTHR10768:SF0">
    <property type="entry name" value="RIBOSOMAL PROTEIN L37"/>
    <property type="match status" value="1"/>
</dbReference>
<dbReference type="Pfam" id="PF01907">
    <property type="entry name" value="Ribosomal_L37e"/>
    <property type="match status" value="1"/>
</dbReference>
<dbReference type="SUPFAM" id="SSF57829">
    <property type="entry name" value="Zn-binding ribosomal proteins"/>
    <property type="match status" value="1"/>
</dbReference>
<dbReference type="PROSITE" id="PS01077">
    <property type="entry name" value="RIBOSOMAL_L37E"/>
    <property type="match status" value="1"/>
</dbReference>
<feature type="chain" id="PRO_0000139718" description="Large ribosomal subunit protein eL37">
    <location>
        <begin position="1" status="less than"/>
        <end position="88"/>
    </location>
</feature>
<feature type="zinc finger region" description="C4-type" evidence="2">
    <location>
        <begin position="17"/>
        <end position="35"/>
    </location>
</feature>
<feature type="binding site" evidence="1">
    <location>
        <position position="17"/>
    </location>
    <ligand>
        <name>Zn(2+)</name>
        <dbReference type="ChEBI" id="CHEBI:29105"/>
    </ligand>
</feature>
<feature type="binding site" evidence="1">
    <location>
        <position position="20"/>
    </location>
    <ligand>
        <name>Zn(2+)</name>
        <dbReference type="ChEBI" id="CHEBI:29105"/>
    </ligand>
</feature>
<feature type="binding site" evidence="1">
    <location>
        <position position="32"/>
    </location>
    <ligand>
        <name>Zn(2+)</name>
        <dbReference type="ChEBI" id="CHEBI:29105"/>
    </ligand>
</feature>
<feature type="binding site" evidence="1">
    <location>
        <position position="35"/>
    </location>
    <ligand>
        <name>Zn(2+)</name>
        <dbReference type="ChEBI" id="CHEBI:29105"/>
    </ligand>
</feature>
<feature type="non-terminal residue">
    <location>
        <position position="1"/>
    </location>
</feature>
<evidence type="ECO:0000250" key="1"/>
<evidence type="ECO:0000255" key="2"/>
<evidence type="ECO:0000305" key="3"/>
<organism>
    <name type="scientific">Candida albicans</name>
    <name type="common">Yeast</name>
    <dbReference type="NCBI Taxonomy" id="5476"/>
    <lineage>
        <taxon>Eukaryota</taxon>
        <taxon>Fungi</taxon>
        <taxon>Dikarya</taxon>
        <taxon>Ascomycota</taxon>
        <taxon>Saccharomycotina</taxon>
        <taxon>Pichiomycetes</taxon>
        <taxon>Debaryomycetaceae</taxon>
        <taxon>Candida/Lodderomyces clade</taxon>
        <taxon>Candida</taxon>
    </lineage>
</organism>
<comment type="function">
    <text evidence="1">Binds to the 23S rRNA.</text>
</comment>
<comment type="cofactor">
    <cofactor evidence="1">
        <name>Zn(2+)</name>
        <dbReference type="ChEBI" id="CHEBI:29105"/>
    </cofactor>
    <text evidence="1">Binds 1 zinc ion per subunit.</text>
</comment>
<comment type="similarity">
    <text evidence="3">Belongs to the eukaryotic ribosomal protein eL37 family.</text>
</comment>
<protein>
    <recommendedName>
        <fullName evidence="3">Large ribosomal subunit protein eL37</fullName>
    </recommendedName>
    <alternativeName>
        <fullName>60S ribosomal protein L37</fullName>
    </alternativeName>
</protein>
<sequence length="88" mass="9888">EGTPSLGKRHNKSHTLCNRCGRRSFHVQKKTCSSCGYPAAKMRSHNWALKAKRRRTTGTGRMAYLKHVTRRFKNGFQTGVAKAQTPSA</sequence>
<proteinExistence type="evidence at transcript level"/>
<keyword id="KW-0479">Metal-binding</keyword>
<keyword id="KW-0687">Ribonucleoprotein</keyword>
<keyword id="KW-0689">Ribosomal protein</keyword>
<keyword id="KW-0694">RNA-binding</keyword>
<keyword id="KW-0699">rRNA-binding</keyword>
<keyword id="KW-0862">Zinc</keyword>
<keyword id="KW-0863">Zinc-finger</keyword>
<reference key="1">
    <citation type="submission" date="1999-12" db="EMBL/GenBank/DDBJ databases">
        <title>A novel method for systematic identification of genes required for growth of Candida albicans.</title>
        <authorList>
            <person name="De Backer M.D."/>
            <person name="Logghe M."/>
            <person name="Viaene J."/>
            <person name="Loonen I."/>
            <person name="Vandoninck S."/>
            <person name="de Hoogt R."/>
            <person name="Nelissen B."/>
            <person name="Dewaele S."/>
            <person name="Simons F."/>
            <person name="Verhasselt P."/>
            <person name="Contreras R."/>
            <person name="Luyten W.H.M.L."/>
        </authorList>
    </citation>
    <scope>NUCLEOTIDE SEQUENCE [MRNA]</scope>
</reference>
<gene>
    <name type="primary">RPL37</name>
</gene>
<name>RL37_CANAX</name>
<accession>Q9P836</accession>